<feature type="chain" id="PRO_1000143583" description="NADH-quinone oxidoreductase subunit H">
    <location>
        <begin position="1"/>
        <end position="354"/>
    </location>
</feature>
<feature type="transmembrane region" description="Helical" evidence="1">
    <location>
        <begin position="25"/>
        <end position="45"/>
    </location>
</feature>
<feature type="transmembrane region" description="Helical" evidence="1">
    <location>
        <begin position="91"/>
        <end position="111"/>
    </location>
</feature>
<feature type="transmembrane region" description="Helical" evidence="1">
    <location>
        <begin position="126"/>
        <end position="146"/>
    </location>
</feature>
<feature type="transmembrane region" description="Helical" evidence="1">
    <location>
        <begin position="170"/>
        <end position="190"/>
    </location>
</feature>
<feature type="transmembrane region" description="Helical" evidence="1">
    <location>
        <begin position="205"/>
        <end position="225"/>
    </location>
</feature>
<feature type="transmembrane region" description="Helical" evidence="1">
    <location>
        <begin position="267"/>
        <end position="287"/>
    </location>
</feature>
<feature type="transmembrane region" description="Helical" evidence="1">
    <location>
        <begin position="290"/>
        <end position="310"/>
    </location>
</feature>
<feature type="transmembrane region" description="Helical" evidence="1">
    <location>
        <begin position="330"/>
        <end position="350"/>
    </location>
</feature>
<organism>
    <name type="scientific">Paraburkholderia phytofirmans (strain DSM 17436 / LMG 22146 / PsJN)</name>
    <name type="common">Burkholderia phytofirmans</name>
    <dbReference type="NCBI Taxonomy" id="398527"/>
    <lineage>
        <taxon>Bacteria</taxon>
        <taxon>Pseudomonadati</taxon>
        <taxon>Pseudomonadota</taxon>
        <taxon>Betaproteobacteria</taxon>
        <taxon>Burkholderiales</taxon>
        <taxon>Burkholderiaceae</taxon>
        <taxon>Paraburkholderia</taxon>
    </lineage>
</organism>
<evidence type="ECO:0000255" key="1">
    <source>
        <dbReference type="HAMAP-Rule" id="MF_01350"/>
    </source>
</evidence>
<comment type="function">
    <text evidence="1">NDH-1 shuttles electrons from NADH, via FMN and iron-sulfur (Fe-S) centers, to quinones in the respiratory chain. The immediate electron acceptor for the enzyme in this species is believed to be ubiquinone. Couples the redox reaction to proton translocation (for every two electrons transferred, four hydrogen ions are translocated across the cytoplasmic membrane), and thus conserves the redox energy in a proton gradient. This subunit may bind ubiquinone.</text>
</comment>
<comment type="catalytic activity">
    <reaction evidence="1">
        <text>a quinone + NADH + 5 H(+)(in) = a quinol + NAD(+) + 4 H(+)(out)</text>
        <dbReference type="Rhea" id="RHEA:57888"/>
        <dbReference type="ChEBI" id="CHEBI:15378"/>
        <dbReference type="ChEBI" id="CHEBI:24646"/>
        <dbReference type="ChEBI" id="CHEBI:57540"/>
        <dbReference type="ChEBI" id="CHEBI:57945"/>
        <dbReference type="ChEBI" id="CHEBI:132124"/>
    </reaction>
</comment>
<comment type="subunit">
    <text evidence="1">NDH-1 is composed of 14 different subunits. Subunits NuoA, H, J, K, L, M, N constitute the membrane sector of the complex.</text>
</comment>
<comment type="subcellular location">
    <subcellularLocation>
        <location evidence="1">Cell inner membrane</location>
        <topology evidence="1">Multi-pass membrane protein</topology>
    </subcellularLocation>
</comment>
<comment type="similarity">
    <text evidence="1">Belongs to the complex I subunit 1 family.</text>
</comment>
<proteinExistence type="inferred from homology"/>
<name>NUOH_PARPJ</name>
<gene>
    <name evidence="1" type="primary">nuoH</name>
    <name type="ordered locus">Bphyt_1350</name>
</gene>
<accession>B2T2F4</accession>
<protein>
    <recommendedName>
        <fullName evidence="1">NADH-quinone oxidoreductase subunit H</fullName>
        <ecNumber evidence="1">7.1.1.-</ecNumber>
    </recommendedName>
    <alternativeName>
        <fullName evidence="1">NADH dehydrogenase I subunit H</fullName>
    </alternativeName>
    <alternativeName>
        <fullName evidence="1">NDH-1 subunit H</fullName>
    </alternativeName>
</protein>
<reference key="1">
    <citation type="journal article" date="2011" name="J. Bacteriol.">
        <title>Complete genome sequence of the plant growth-promoting endophyte Burkholderia phytofirmans strain PsJN.</title>
        <authorList>
            <person name="Weilharter A."/>
            <person name="Mitter B."/>
            <person name="Shin M.V."/>
            <person name="Chain P.S."/>
            <person name="Nowak J."/>
            <person name="Sessitsch A."/>
        </authorList>
    </citation>
    <scope>NUCLEOTIDE SEQUENCE [LARGE SCALE GENOMIC DNA]</scope>
    <source>
        <strain>DSM 17436 / LMG 22146 / PsJN</strain>
    </source>
</reference>
<dbReference type="EC" id="7.1.1.-" evidence="1"/>
<dbReference type="EMBL" id="CP001052">
    <property type="protein sequence ID" value="ACD15765.1"/>
    <property type="molecule type" value="Genomic_DNA"/>
</dbReference>
<dbReference type="RefSeq" id="WP_012432382.1">
    <property type="nucleotide sequence ID" value="NC_010681.1"/>
</dbReference>
<dbReference type="SMR" id="B2T2F4"/>
<dbReference type="STRING" id="398527.Bphyt_1350"/>
<dbReference type="KEGG" id="bpy:Bphyt_1350"/>
<dbReference type="eggNOG" id="COG1005">
    <property type="taxonomic scope" value="Bacteria"/>
</dbReference>
<dbReference type="HOGENOM" id="CLU_015134_0_1_4"/>
<dbReference type="OrthoDB" id="9803734at2"/>
<dbReference type="Proteomes" id="UP000001739">
    <property type="component" value="Chromosome 1"/>
</dbReference>
<dbReference type="GO" id="GO:0005886">
    <property type="term" value="C:plasma membrane"/>
    <property type="evidence" value="ECO:0007669"/>
    <property type="project" value="UniProtKB-SubCell"/>
</dbReference>
<dbReference type="GO" id="GO:0003954">
    <property type="term" value="F:NADH dehydrogenase activity"/>
    <property type="evidence" value="ECO:0007669"/>
    <property type="project" value="TreeGrafter"/>
</dbReference>
<dbReference type="GO" id="GO:0016655">
    <property type="term" value="F:oxidoreductase activity, acting on NAD(P)H, quinone or similar compound as acceptor"/>
    <property type="evidence" value="ECO:0007669"/>
    <property type="project" value="UniProtKB-UniRule"/>
</dbReference>
<dbReference type="GO" id="GO:0048038">
    <property type="term" value="F:quinone binding"/>
    <property type="evidence" value="ECO:0007669"/>
    <property type="project" value="UniProtKB-KW"/>
</dbReference>
<dbReference type="GO" id="GO:0009060">
    <property type="term" value="P:aerobic respiration"/>
    <property type="evidence" value="ECO:0007669"/>
    <property type="project" value="TreeGrafter"/>
</dbReference>
<dbReference type="HAMAP" id="MF_01350">
    <property type="entry name" value="NDH1_NuoH"/>
    <property type="match status" value="1"/>
</dbReference>
<dbReference type="InterPro" id="IPR001694">
    <property type="entry name" value="NADH_UbQ_OxRdtase_su1/FPO"/>
</dbReference>
<dbReference type="InterPro" id="IPR018086">
    <property type="entry name" value="NADH_UbQ_OxRdtase_su1_CS"/>
</dbReference>
<dbReference type="NCBIfam" id="NF004741">
    <property type="entry name" value="PRK06076.1-2"/>
    <property type="match status" value="1"/>
</dbReference>
<dbReference type="NCBIfam" id="NF004742">
    <property type="entry name" value="PRK06076.1-3"/>
    <property type="match status" value="1"/>
</dbReference>
<dbReference type="PANTHER" id="PTHR11432">
    <property type="entry name" value="NADH DEHYDROGENASE SUBUNIT 1"/>
    <property type="match status" value="1"/>
</dbReference>
<dbReference type="PANTHER" id="PTHR11432:SF3">
    <property type="entry name" value="NADH-UBIQUINONE OXIDOREDUCTASE CHAIN 1"/>
    <property type="match status" value="1"/>
</dbReference>
<dbReference type="Pfam" id="PF00146">
    <property type="entry name" value="NADHdh"/>
    <property type="match status" value="1"/>
</dbReference>
<dbReference type="PROSITE" id="PS00668">
    <property type="entry name" value="COMPLEX1_ND1_2"/>
    <property type="match status" value="1"/>
</dbReference>
<sequence length="354" mass="38985">MSLFDTINSGGTQLLGVAWPTVWALVRILVVAVVILLCVAYLILWERKLIGWMHVRLGPNRVGPAGLLQPIADVLKLLLKEVIQPAQASRWIYLIAPIMVVVPAFAVWAVIPFQAGAVLGDINAGLLYAMAISSIGVYGVILAGWASNSKYAFLGAMRAAAQMVSYEISMGFALVVVLMTAGTLNLSGIVASQEHGIFASYGLNFLSWNWLPLLPMFVVYFISGIAETNRHPFDVVEGESEIVAGHMIDYSGMAFALFFLAEYINMIVISALAATLFLGGWSAPFGFLSFVPGIVWLVAKVFLLLSVFIWARATFPRYRYDQIMRLGWKIFIPVCVVWLVVVGFWIMSPLNIWK</sequence>
<keyword id="KW-0997">Cell inner membrane</keyword>
<keyword id="KW-1003">Cell membrane</keyword>
<keyword id="KW-0472">Membrane</keyword>
<keyword id="KW-0520">NAD</keyword>
<keyword id="KW-0874">Quinone</keyword>
<keyword id="KW-1278">Translocase</keyword>
<keyword id="KW-0812">Transmembrane</keyword>
<keyword id="KW-1133">Transmembrane helix</keyword>
<keyword id="KW-0830">Ubiquinone</keyword>